<name>HEMH_ECTM1</name>
<proteinExistence type="inferred from homology"/>
<protein>
    <recommendedName>
        <fullName evidence="1">Ferrochelatase</fullName>
        <ecNumber evidence="1">4.98.1.1</ecNumber>
    </recommendedName>
    <alternativeName>
        <fullName evidence="1">Heme synthase</fullName>
    </alternativeName>
    <alternativeName>
        <fullName evidence="1">Protoheme ferro-lyase</fullName>
    </alternativeName>
</protein>
<feature type="chain" id="PRO_1000019348" description="Ferrochelatase">
    <location>
        <begin position="1"/>
        <end position="340"/>
    </location>
</feature>
<feature type="binding site" evidence="1">
    <location>
        <position position="189"/>
    </location>
    <ligand>
        <name>Fe cation</name>
        <dbReference type="ChEBI" id="CHEBI:24875"/>
    </ligand>
</feature>
<feature type="binding site" evidence="1">
    <location>
        <position position="292"/>
    </location>
    <ligand>
        <name>Fe cation</name>
        <dbReference type="ChEBI" id="CHEBI:24875"/>
    </ligand>
</feature>
<evidence type="ECO:0000255" key="1">
    <source>
        <dbReference type="HAMAP-Rule" id="MF_00323"/>
    </source>
</evidence>
<sequence>MTDHALLLANLGSPASTEVADVRRYLNQFLMDPYVIDLPWPLRRLLVSLILIKRPAASAHAYASIWWDEGSPLVVLSRRLQEAMKTHWSHGPVELAMRYGEPSIEATLQRLADQGVRQVTLAPLYPQFADSTTTTVIEEAKRVVRQRSLDLRFSVLPPFYDQPEYLDALVASAKPYLEQGFDHLLLSFHGLPERHLHKLDPSGHCLKGDDCCRTASPAVLATCYRAQCLRSAELFAERMGLRPEQWSVSFQSRLGRAKWIEPYTETRLDELAAQGVKKLLVMCPAFVADCIETLEEIGDRGREQFVEAGGESLQLVPCLNDHPDWVAALKVLCERAPQAL</sequence>
<dbReference type="EC" id="4.98.1.1" evidence="1"/>
<dbReference type="EMBL" id="CP000680">
    <property type="protein sequence ID" value="ABP83844.1"/>
    <property type="molecule type" value="Genomic_DNA"/>
</dbReference>
<dbReference type="SMR" id="A4XR78"/>
<dbReference type="STRING" id="399739.Pmen_1077"/>
<dbReference type="KEGG" id="pmy:Pmen_1077"/>
<dbReference type="PATRIC" id="fig|399739.8.peg.1087"/>
<dbReference type="eggNOG" id="COG0276">
    <property type="taxonomic scope" value="Bacteria"/>
</dbReference>
<dbReference type="HOGENOM" id="CLU_018884_0_1_6"/>
<dbReference type="OrthoDB" id="9809741at2"/>
<dbReference type="UniPathway" id="UPA00252">
    <property type="reaction ID" value="UER00325"/>
</dbReference>
<dbReference type="GO" id="GO:0005737">
    <property type="term" value="C:cytoplasm"/>
    <property type="evidence" value="ECO:0007669"/>
    <property type="project" value="UniProtKB-SubCell"/>
</dbReference>
<dbReference type="GO" id="GO:0004325">
    <property type="term" value="F:ferrochelatase activity"/>
    <property type="evidence" value="ECO:0007669"/>
    <property type="project" value="UniProtKB-UniRule"/>
</dbReference>
<dbReference type="GO" id="GO:0046872">
    <property type="term" value="F:metal ion binding"/>
    <property type="evidence" value="ECO:0007669"/>
    <property type="project" value="UniProtKB-KW"/>
</dbReference>
<dbReference type="GO" id="GO:0006783">
    <property type="term" value="P:heme biosynthetic process"/>
    <property type="evidence" value="ECO:0007669"/>
    <property type="project" value="UniProtKB-UniRule"/>
</dbReference>
<dbReference type="CDD" id="cd00419">
    <property type="entry name" value="Ferrochelatase_C"/>
    <property type="match status" value="1"/>
</dbReference>
<dbReference type="CDD" id="cd03411">
    <property type="entry name" value="Ferrochelatase_N"/>
    <property type="match status" value="1"/>
</dbReference>
<dbReference type="Gene3D" id="3.40.50.1400">
    <property type="match status" value="2"/>
</dbReference>
<dbReference type="HAMAP" id="MF_00323">
    <property type="entry name" value="Ferrochelatase"/>
    <property type="match status" value="1"/>
</dbReference>
<dbReference type="InterPro" id="IPR001015">
    <property type="entry name" value="Ferrochelatase"/>
</dbReference>
<dbReference type="InterPro" id="IPR033644">
    <property type="entry name" value="Ferrochelatase_C"/>
</dbReference>
<dbReference type="InterPro" id="IPR033659">
    <property type="entry name" value="Ferrochelatase_N"/>
</dbReference>
<dbReference type="NCBIfam" id="TIGR00109">
    <property type="entry name" value="hemH"/>
    <property type="match status" value="1"/>
</dbReference>
<dbReference type="PANTHER" id="PTHR11108">
    <property type="entry name" value="FERROCHELATASE"/>
    <property type="match status" value="1"/>
</dbReference>
<dbReference type="PANTHER" id="PTHR11108:SF1">
    <property type="entry name" value="FERROCHELATASE, MITOCHONDRIAL"/>
    <property type="match status" value="1"/>
</dbReference>
<dbReference type="Pfam" id="PF00762">
    <property type="entry name" value="Ferrochelatase"/>
    <property type="match status" value="1"/>
</dbReference>
<dbReference type="SUPFAM" id="SSF53800">
    <property type="entry name" value="Chelatase"/>
    <property type="match status" value="1"/>
</dbReference>
<comment type="function">
    <text evidence="1">Catalyzes the ferrous insertion into protoporphyrin IX.</text>
</comment>
<comment type="catalytic activity">
    <reaction evidence="1">
        <text>heme b + 2 H(+) = protoporphyrin IX + Fe(2+)</text>
        <dbReference type="Rhea" id="RHEA:22584"/>
        <dbReference type="ChEBI" id="CHEBI:15378"/>
        <dbReference type="ChEBI" id="CHEBI:29033"/>
        <dbReference type="ChEBI" id="CHEBI:57306"/>
        <dbReference type="ChEBI" id="CHEBI:60344"/>
        <dbReference type="EC" id="4.98.1.1"/>
    </reaction>
</comment>
<comment type="pathway">
    <text evidence="1">Porphyrin-containing compound metabolism; protoheme biosynthesis; protoheme from protoporphyrin-IX: step 1/1.</text>
</comment>
<comment type="subcellular location">
    <subcellularLocation>
        <location evidence="1">Cytoplasm</location>
    </subcellularLocation>
</comment>
<comment type="similarity">
    <text evidence="1">Belongs to the ferrochelatase family.</text>
</comment>
<organism>
    <name type="scientific">Ectopseudomonas mendocina (strain ymp)</name>
    <name type="common">Pseudomonas mendocina</name>
    <dbReference type="NCBI Taxonomy" id="399739"/>
    <lineage>
        <taxon>Bacteria</taxon>
        <taxon>Pseudomonadati</taxon>
        <taxon>Pseudomonadota</taxon>
        <taxon>Gammaproteobacteria</taxon>
        <taxon>Pseudomonadales</taxon>
        <taxon>Pseudomonadaceae</taxon>
        <taxon>Ectopseudomonas</taxon>
    </lineage>
</organism>
<gene>
    <name evidence="1" type="primary">hemH</name>
    <name type="ordered locus">Pmen_1077</name>
</gene>
<reference key="1">
    <citation type="submission" date="2007-04" db="EMBL/GenBank/DDBJ databases">
        <title>Complete sequence of Pseudomonas mendocina ymp.</title>
        <authorList>
            <consortium name="US DOE Joint Genome Institute"/>
            <person name="Copeland A."/>
            <person name="Lucas S."/>
            <person name="Lapidus A."/>
            <person name="Barry K."/>
            <person name="Glavina del Rio T."/>
            <person name="Dalin E."/>
            <person name="Tice H."/>
            <person name="Pitluck S."/>
            <person name="Kiss H."/>
            <person name="Brettin T."/>
            <person name="Detter J.C."/>
            <person name="Bruce D."/>
            <person name="Han C."/>
            <person name="Schmutz J."/>
            <person name="Larimer F."/>
            <person name="Land M."/>
            <person name="Hauser L."/>
            <person name="Kyrpides N."/>
            <person name="Mikhailova N."/>
            <person name="Hersman L."/>
            <person name="Dubois J."/>
            <person name="Maurice P."/>
            <person name="Richardson P."/>
        </authorList>
    </citation>
    <scope>NUCLEOTIDE SEQUENCE [LARGE SCALE GENOMIC DNA]</scope>
    <source>
        <strain>ymp</strain>
    </source>
</reference>
<keyword id="KW-0963">Cytoplasm</keyword>
<keyword id="KW-0350">Heme biosynthesis</keyword>
<keyword id="KW-0408">Iron</keyword>
<keyword id="KW-0456">Lyase</keyword>
<keyword id="KW-0479">Metal-binding</keyword>
<keyword id="KW-0627">Porphyrin biosynthesis</keyword>
<accession>A4XR78</accession>